<gene>
    <name type="primary">GOLGA2P5</name>
    <name type="synonym">GOLGA2B</name>
    <name type="synonym">GOLGA2L1</name>
    <name type="ORF">PP1757</name>
</gene>
<dbReference type="EMBL" id="AF217995">
    <property type="protein sequence ID" value="AAG17237.1"/>
    <property type="molecule type" value="mRNA"/>
</dbReference>
<dbReference type="EMBL" id="AL137720">
    <property type="protein sequence ID" value="CAB70892.1"/>
    <property type="status" value="ALT_INIT"/>
    <property type="molecule type" value="mRNA"/>
</dbReference>
<dbReference type="EMBL" id="AC010203">
    <property type="status" value="NOT_ANNOTATED_CDS"/>
    <property type="molecule type" value="Genomic_DNA"/>
</dbReference>
<dbReference type="EMBL" id="CH471054">
    <property type="protein sequence ID" value="EAW97621.1"/>
    <property type="molecule type" value="Genomic_DNA"/>
</dbReference>
<dbReference type="EMBL" id="BC141930">
    <property type="protein sequence ID" value="AAI41931.1"/>
    <property type="molecule type" value="mRNA"/>
</dbReference>
<dbReference type="PIR" id="T46478">
    <property type="entry name" value="T46478"/>
</dbReference>
<dbReference type="SMR" id="Q9HBQ8"/>
<dbReference type="IntAct" id="Q9HBQ8">
    <property type="interactions" value="10"/>
</dbReference>
<dbReference type="BioMuta" id="HGNC:25315"/>
<dbReference type="MassIVE" id="Q9HBQ8"/>
<dbReference type="PeptideAtlas" id="Q9HBQ8"/>
<dbReference type="AGR" id="HGNC:25315"/>
<dbReference type="GeneCards" id="GOLGA2P5"/>
<dbReference type="HGNC" id="HGNC:25315">
    <property type="gene designation" value="GOLGA2P5"/>
</dbReference>
<dbReference type="neXtProt" id="NX_Q9HBQ8"/>
<dbReference type="PharmGKB" id="PA165512779"/>
<dbReference type="InParanoid" id="Q9HBQ8"/>
<dbReference type="PAN-GO" id="Q9HBQ8">
    <property type="GO annotations" value="5 GO annotations based on evolutionary models"/>
</dbReference>
<dbReference type="PhylomeDB" id="Q9HBQ8"/>
<dbReference type="PathwayCommons" id="Q9HBQ8"/>
<dbReference type="Pharos" id="Q9HBQ8">
    <property type="development level" value="Tdark"/>
</dbReference>
<dbReference type="Proteomes" id="UP000005640">
    <property type="component" value="Unplaced"/>
</dbReference>
<dbReference type="RNAct" id="Q9HBQ8">
    <property type="molecule type" value="protein"/>
</dbReference>
<dbReference type="InterPro" id="IPR043976">
    <property type="entry name" value="GOLGA_cons_dom"/>
</dbReference>
<dbReference type="Pfam" id="PF15070">
    <property type="entry name" value="GOLGA2L5"/>
    <property type="match status" value="1"/>
</dbReference>
<name>GGA2B_HUMAN</name>
<feature type="chain" id="PRO_0000314961" description="Putative golgin subfamily A member 2B">
    <location>
        <begin position="1"/>
        <end position="144"/>
    </location>
</feature>
<feature type="region of interest" description="Disordered" evidence="1">
    <location>
        <begin position="1"/>
        <end position="20"/>
    </location>
</feature>
<feature type="region of interest" description="Disordered" evidence="1">
    <location>
        <begin position="95"/>
        <end position="132"/>
    </location>
</feature>
<feature type="compositionally biased region" description="Gly residues" evidence="1">
    <location>
        <begin position="110"/>
        <end position="131"/>
    </location>
</feature>
<feature type="splice variant" id="VSP_030454" description="In isoform 2." evidence="2">
    <location>
        <begin position="98"/>
        <end position="144"/>
    </location>
</feature>
<feature type="sequence variant" id="VAR_038142" description="In dbSNP:rs12370675.">
    <original>A</original>
    <variation>V</variation>
    <location>
        <position position="110"/>
    </location>
</feature>
<accession>Q9HBQ8</accession>
<accession>Q9NSV2</accession>
<reference key="1">
    <citation type="journal article" date="2004" name="Proc. Natl. Acad. Sci. U.S.A.">
        <title>Large-scale cDNA transfection screening for genes related to cancer development and progression.</title>
        <authorList>
            <person name="Wan D."/>
            <person name="Gong Y."/>
            <person name="Qin W."/>
            <person name="Zhang P."/>
            <person name="Li J."/>
            <person name="Wei L."/>
            <person name="Zhou X."/>
            <person name="Li H."/>
            <person name="Qiu X."/>
            <person name="Zhong F."/>
            <person name="He L."/>
            <person name="Yu J."/>
            <person name="Yao G."/>
            <person name="Jiang H."/>
            <person name="Qian L."/>
            <person name="Yu Y."/>
            <person name="Shu H."/>
            <person name="Chen X."/>
            <person name="Xu H."/>
            <person name="Guo M."/>
            <person name="Pan Z."/>
            <person name="Chen Y."/>
            <person name="Ge C."/>
            <person name="Yang S."/>
            <person name="Gu J."/>
        </authorList>
    </citation>
    <scope>NUCLEOTIDE SEQUENCE [LARGE SCALE MRNA] (ISOFORM 1)</scope>
</reference>
<reference key="2">
    <citation type="journal article" date="2007" name="BMC Genomics">
        <title>The full-ORF clone resource of the German cDNA consortium.</title>
        <authorList>
            <person name="Bechtel S."/>
            <person name="Rosenfelder H."/>
            <person name="Duda A."/>
            <person name="Schmidt C.P."/>
            <person name="Ernst U."/>
            <person name="Wellenreuther R."/>
            <person name="Mehrle A."/>
            <person name="Schuster C."/>
            <person name="Bahr A."/>
            <person name="Bloecker H."/>
            <person name="Heubner D."/>
            <person name="Hoerlein A."/>
            <person name="Michel G."/>
            <person name="Wedler H."/>
            <person name="Koehrer K."/>
            <person name="Ottenwaelder B."/>
            <person name="Poustka A."/>
            <person name="Wiemann S."/>
            <person name="Schupp I."/>
        </authorList>
    </citation>
    <scope>NUCLEOTIDE SEQUENCE [LARGE SCALE MRNA] (ISOFORM 2)</scope>
    <source>
        <tissue>Testis</tissue>
    </source>
</reference>
<reference key="3">
    <citation type="journal article" date="2006" name="Nature">
        <title>The finished DNA sequence of human chromosome 12.</title>
        <authorList>
            <person name="Scherer S.E."/>
            <person name="Muzny D.M."/>
            <person name="Buhay C.J."/>
            <person name="Chen R."/>
            <person name="Cree A."/>
            <person name="Ding Y."/>
            <person name="Dugan-Rocha S."/>
            <person name="Gill R."/>
            <person name="Gunaratne P."/>
            <person name="Harris R.A."/>
            <person name="Hawes A.C."/>
            <person name="Hernandez J."/>
            <person name="Hodgson A.V."/>
            <person name="Hume J."/>
            <person name="Jackson A."/>
            <person name="Khan Z.M."/>
            <person name="Kovar-Smith C."/>
            <person name="Lewis L.R."/>
            <person name="Lozado R.J."/>
            <person name="Metzker M.L."/>
            <person name="Milosavljevic A."/>
            <person name="Miner G.R."/>
            <person name="Montgomery K.T."/>
            <person name="Morgan M.B."/>
            <person name="Nazareth L.V."/>
            <person name="Scott G."/>
            <person name="Sodergren E."/>
            <person name="Song X.-Z."/>
            <person name="Steffen D."/>
            <person name="Lovering R.C."/>
            <person name="Wheeler D.A."/>
            <person name="Worley K.C."/>
            <person name="Yuan Y."/>
            <person name="Zhang Z."/>
            <person name="Adams C.Q."/>
            <person name="Ansari-Lari M.A."/>
            <person name="Ayele M."/>
            <person name="Brown M.J."/>
            <person name="Chen G."/>
            <person name="Chen Z."/>
            <person name="Clerc-Blankenburg K.P."/>
            <person name="Davis C."/>
            <person name="Delgado O."/>
            <person name="Dinh H.H."/>
            <person name="Draper H."/>
            <person name="Gonzalez-Garay M.L."/>
            <person name="Havlak P."/>
            <person name="Jackson L.R."/>
            <person name="Jacob L.S."/>
            <person name="Kelly S.H."/>
            <person name="Li L."/>
            <person name="Li Z."/>
            <person name="Liu J."/>
            <person name="Liu W."/>
            <person name="Lu J."/>
            <person name="Maheshwari M."/>
            <person name="Nguyen B.-V."/>
            <person name="Okwuonu G.O."/>
            <person name="Pasternak S."/>
            <person name="Perez L.M."/>
            <person name="Plopper F.J.H."/>
            <person name="Santibanez J."/>
            <person name="Shen H."/>
            <person name="Tabor P.E."/>
            <person name="Verduzco D."/>
            <person name="Waldron L."/>
            <person name="Wang Q."/>
            <person name="Williams G.A."/>
            <person name="Zhang J."/>
            <person name="Zhou J."/>
            <person name="Allen C.C."/>
            <person name="Amin A.G."/>
            <person name="Anyalebechi V."/>
            <person name="Bailey M."/>
            <person name="Barbaria J.A."/>
            <person name="Bimage K.E."/>
            <person name="Bryant N.P."/>
            <person name="Burch P.E."/>
            <person name="Burkett C.E."/>
            <person name="Burrell K.L."/>
            <person name="Calderon E."/>
            <person name="Cardenas V."/>
            <person name="Carter K."/>
            <person name="Casias K."/>
            <person name="Cavazos I."/>
            <person name="Cavazos S.R."/>
            <person name="Ceasar H."/>
            <person name="Chacko J."/>
            <person name="Chan S.N."/>
            <person name="Chavez D."/>
            <person name="Christopoulos C."/>
            <person name="Chu J."/>
            <person name="Cockrell R."/>
            <person name="Cox C.D."/>
            <person name="Dang M."/>
            <person name="Dathorne S.R."/>
            <person name="David R."/>
            <person name="Davis C.M."/>
            <person name="Davy-Carroll L."/>
            <person name="Deshazo D.R."/>
            <person name="Donlin J.E."/>
            <person name="D'Souza L."/>
            <person name="Eaves K.A."/>
            <person name="Egan A."/>
            <person name="Emery-Cohen A.J."/>
            <person name="Escotto M."/>
            <person name="Flagg N."/>
            <person name="Forbes L.D."/>
            <person name="Gabisi A.M."/>
            <person name="Garza M."/>
            <person name="Hamilton C."/>
            <person name="Henderson N."/>
            <person name="Hernandez O."/>
            <person name="Hines S."/>
            <person name="Hogues M.E."/>
            <person name="Huang M."/>
            <person name="Idlebird D.G."/>
            <person name="Johnson R."/>
            <person name="Jolivet A."/>
            <person name="Jones S."/>
            <person name="Kagan R."/>
            <person name="King L.M."/>
            <person name="Leal B."/>
            <person name="Lebow H."/>
            <person name="Lee S."/>
            <person name="LeVan J.M."/>
            <person name="Lewis L.C."/>
            <person name="London P."/>
            <person name="Lorensuhewa L.M."/>
            <person name="Loulseged H."/>
            <person name="Lovett D.A."/>
            <person name="Lucier A."/>
            <person name="Lucier R.L."/>
            <person name="Ma J."/>
            <person name="Madu R.C."/>
            <person name="Mapua P."/>
            <person name="Martindale A.D."/>
            <person name="Martinez E."/>
            <person name="Massey E."/>
            <person name="Mawhiney S."/>
            <person name="Meador M.G."/>
            <person name="Mendez S."/>
            <person name="Mercado C."/>
            <person name="Mercado I.C."/>
            <person name="Merritt C.E."/>
            <person name="Miner Z.L."/>
            <person name="Minja E."/>
            <person name="Mitchell T."/>
            <person name="Mohabbat F."/>
            <person name="Mohabbat K."/>
            <person name="Montgomery B."/>
            <person name="Moore N."/>
            <person name="Morris S."/>
            <person name="Munidasa M."/>
            <person name="Ngo R.N."/>
            <person name="Nguyen N.B."/>
            <person name="Nickerson E."/>
            <person name="Nwaokelemeh O.O."/>
            <person name="Nwokenkwo S."/>
            <person name="Obregon M."/>
            <person name="Oguh M."/>
            <person name="Oragunye N."/>
            <person name="Oviedo R.J."/>
            <person name="Parish B.J."/>
            <person name="Parker D.N."/>
            <person name="Parrish J."/>
            <person name="Parks K.L."/>
            <person name="Paul H.A."/>
            <person name="Payton B.A."/>
            <person name="Perez A."/>
            <person name="Perrin W."/>
            <person name="Pickens A."/>
            <person name="Primus E.L."/>
            <person name="Pu L.-L."/>
            <person name="Puazo M."/>
            <person name="Quiles M.M."/>
            <person name="Quiroz J.B."/>
            <person name="Rabata D."/>
            <person name="Reeves K."/>
            <person name="Ruiz S.J."/>
            <person name="Shao H."/>
            <person name="Sisson I."/>
            <person name="Sonaike T."/>
            <person name="Sorelle R.P."/>
            <person name="Sutton A.E."/>
            <person name="Svatek A.F."/>
            <person name="Svetz L.A."/>
            <person name="Tamerisa K.S."/>
            <person name="Taylor T.R."/>
            <person name="Teague B."/>
            <person name="Thomas N."/>
            <person name="Thorn R.D."/>
            <person name="Trejos Z.Y."/>
            <person name="Trevino B.K."/>
            <person name="Ukegbu O.N."/>
            <person name="Urban J.B."/>
            <person name="Vasquez L.I."/>
            <person name="Vera V.A."/>
            <person name="Villasana D.M."/>
            <person name="Wang L."/>
            <person name="Ward-Moore S."/>
            <person name="Warren J.T."/>
            <person name="Wei X."/>
            <person name="White F."/>
            <person name="Williamson A.L."/>
            <person name="Wleczyk R."/>
            <person name="Wooden H.S."/>
            <person name="Wooden S.H."/>
            <person name="Yen J."/>
            <person name="Yoon L."/>
            <person name="Yoon V."/>
            <person name="Zorrilla S.E."/>
            <person name="Nelson D."/>
            <person name="Kucherlapati R."/>
            <person name="Weinstock G."/>
            <person name="Gibbs R.A."/>
        </authorList>
    </citation>
    <scope>NUCLEOTIDE SEQUENCE [LARGE SCALE GENOMIC DNA]</scope>
</reference>
<reference key="4">
    <citation type="submission" date="2005-07" db="EMBL/GenBank/DDBJ databases">
        <authorList>
            <person name="Mural R.J."/>
            <person name="Istrail S."/>
            <person name="Sutton G.G."/>
            <person name="Florea L."/>
            <person name="Halpern A.L."/>
            <person name="Mobarry C.M."/>
            <person name="Lippert R."/>
            <person name="Walenz B."/>
            <person name="Shatkay H."/>
            <person name="Dew I."/>
            <person name="Miller J.R."/>
            <person name="Flanigan M.J."/>
            <person name="Edwards N.J."/>
            <person name="Bolanos R."/>
            <person name="Fasulo D."/>
            <person name="Halldorsson B.V."/>
            <person name="Hannenhalli S."/>
            <person name="Turner R."/>
            <person name="Yooseph S."/>
            <person name="Lu F."/>
            <person name="Nusskern D.R."/>
            <person name="Shue B.C."/>
            <person name="Zheng X.H."/>
            <person name="Zhong F."/>
            <person name="Delcher A.L."/>
            <person name="Huson D.H."/>
            <person name="Kravitz S.A."/>
            <person name="Mouchard L."/>
            <person name="Reinert K."/>
            <person name="Remington K.A."/>
            <person name="Clark A.G."/>
            <person name="Waterman M.S."/>
            <person name="Eichler E.E."/>
            <person name="Adams M.D."/>
            <person name="Hunkapiller M.W."/>
            <person name="Myers E.W."/>
            <person name="Venter J.C."/>
        </authorList>
    </citation>
    <scope>NUCLEOTIDE SEQUENCE [LARGE SCALE GENOMIC DNA]</scope>
</reference>
<reference key="5">
    <citation type="journal article" date="2004" name="Genome Res.">
        <title>The status, quality, and expansion of the NIH full-length cDNA project: the Mammalian Gene Collection (MGC).</title>
        <authorList>
            <consortium name="The MGC Project Team"/>
        </authorList>
    </citation>
    <scope>NUCLEOTIDE SEQUENCE [LARGE SCALE MRNA] (ISOFORM 1)</scope>
</reference>
<sequence length="144" mass="15482">MDSEEEEEVPQPMPSIPEDLESQKAMVAFFNSAVASAEEEQARLCGQLKECTASAWLICWPRPRRNLRQQPQPQELGVIPCVGRPTRPCRGPWRSCGRVHRTVPEPEGSAEGGGVHQQAGPGQGRGEGEAAGAGVACGRLQQVA</sequence>
<protein>
    <recommendedName>
        <fullName>Putative golgin subfamily A member 2B</fullName>
    </recommendedName>
    <alternativeName>
        <fullName>Golgin subfamily A member 2-like protein 1</fullName>
    </alternativeName>
</protein>
<organism>
    <name type="scientific">Homo sapiens</name>
    <name type="common">Human</name>
    <dbReference type="NCBI Taxonomy" id="9606"/>
    <lineage>
        <taxon>Eukaryota</taxon>
        <taxon>Metazoa</taxon>
        <taxon>Chordata</taxon>
        <taxon>Craniata</taxon>
        <taxon>Vertebrata</taxon>
        <taxon>Euteleostomi</taxon>
        <taxon>Mammalia</taxon>
        <taxon>Eutheria</taxon>
        <taxon>Euarchontoglires</taxon>
        <taxon>Primates</taxon>
        <taxon>Haplorrhini</taxon>
        <taxon>Catarrhini</taxon>
        <taxon>Hominidae</taxon>
        <taxon>Homo</taxon>
    </lineage>
</organism>
<comment type="interaction">
    <interactant intactId="EBI-22000587">
        <id>Q9HBQ8</id>
    </interactant>
    <interactant intactId="EBI-750300">
        <id>Q01658</id>
        <label>DR1</label>
    </interactant>
    <organismsDiffer>false</organismsDiffer>
    <experiments>3</experiments>
</comment>
<comment type="interaction">
    <interactant intactId="EBI-22000587">
        <id>Q9HBQ8</id>
    </interactant>
    <interactant intactId="EBI-747754">
        <id>P28799</id>
        <label>GRN</label>
    </interactant>
    <organismsDiffer>false</organismsDiffer>
    <experiments>3</experiments>
</comment>
<comment type="interaction">
    <interactant intactId="EBI-22000587">
        <id>Q9HBQ8</id>
    </interactant>
    <interactant intactId="EBI-1054873">
        <id>Q9Y5Q9</id>
        <label>GTF3C3</label>
    </interactant>
    <organismsDiffer>false</organismsDiffer>
    <experiments>3</experiments>
</comment>
<comment type="interaction">
    <interactant intactId="EBI-22000587">
        <id>Q9HBQ8</id>
    </interactant>
    <interactant intactId="EBI-352682">
        <id>P04792</id>
        <label>HSPB1</label>
    </interactant>
    <organismsDiffer>false</organismsDiffer>
    <experiments>4</experiments>
</comment>
<comment type="interaction">
    <interactant intactId="EBI-22000587">
        <id>Q9HBQ8</id>
    </interactant>
    <interactant intactId="EBI-10975473">
        <id>O60333-2</id>
        <label>KIF1B</label>
    </interactant>
    <organismsDiffer>false</organismsDiffer>
    <experiments>3</experiments>
</comment>
<comment type="interaction">
    <interactant intactId="EBI-22000587">
        <id>Q9HBQ8</id>
    </interactant>
    <interactant intactId="EBI-50433196">
        <id>A0A6Q8PF08</id>
        <label>PMP22</label>
    </interactant>
    <organismsDiffer>false</organismsDiffer>
    <experiments>3</experiments>
</comment>
<comment type="interaction">
    <interactant intactId="EBI-22000587">
        <id>Q9HBQ8</id>
    </interactant>
    <interactant intactId="EBI-396669">
        <id>Q9Y3C5</id>
        <label>RNF11</label>
    </interactant>
    <organismsDiffer>false</organismsDiffer>
    <experiments>3</experiments>
</comment>
<comment type="interaction">
    <interactant intactId="EBI-22000587">
        <id>Q9HBQ8</id>
    </interactant>
    <interactant intactId="EBI-720609">
        <id>O76024</id>
        <label>WFS1</label>
    </interactant>
    <organismsDiffer>false</organismsDiffer>
    <experiments>3</experiments>
</comment>
<comment type="alternative products">
    <event type="alternative splicing"/>
    <isoform>
        <id>Q9HBQ8-1</id>
        <name>1</name>
        <sequence type="displayed"/>
    </isoform>
    <isoform>
        <id>Q9HBQ8-2</id>
        <name>2</name>
        <sequence type="described" ref="VSP_030454"/>
    </isoform>
</comment>
<comment type="similarity">
    <text evidence="3">Belongs to the GOLGA2 family.</text>
</comment>
<comment type="caution">
    <text evidence="3">Could be the product of a pseudogene.</text>
</comment>
<comment type="sequence caution" evidence="3">
    <conflict type="erroneous initiation">
        <sequence resource="EMBL-CDS" id="CAB70892"/>
    </conflict>
    <text>Extended N-terminus.</text>
</comment>
<proteinExistence type="uncertain"/>
<evidence type="ECO:0000256" key="1">
    <source>
        <dbReference type="SAM" id="MobiDB-lite"/>
    </source>
</evidence>
<evidence type="ECO:0000303" key="2">
    <source>
    </source>
</evidence>
<evidence type="ECO:0000305" key="3"/>
<keyword id="KW-0025">Alternative splicing</keyword>
<keyword id="KW-1185">Reference proteome</keyword>